<gene>
    <name type="primary">lcl3</name>
    <name type="ORF">BC1G_02200</name>
    <name type="ORF">BCIN_06g05830</name>
</gene>
<dbReference type="EC" id="3.1.-.-"/>
<dbReference type="EMBL" id="CP009810">
    <property type="protein sequence ID" value="ATZ51157.1"/>
    <property type="molecule type" value="Genomic_DNA"/>
</dbReference>
<dbReference type="SMR" id="A6RP27"/>
<dbReference type="EnsemblFungi" id="Bcin06g05830.1">
    <property type="protein sequence ID" value="Bcin06p05830.1"/>
    <property type="gene ID" value="Bcin06g05830"/>
</dbReference>
<dbReference type="GeneID" id="5439644"/>
<dbReference type="KEGG" id="bfu:BCIN_06g05830"/>
<dbReference type="VEuPathDB" id="FungiDB:Bcin06g05830"/>
<dbReference type="OMA" id="IYHTPGG"/>
<dbReference type="OrthoDB" id="430293at2759"/>
<dbReference type="Proteomes" id="UP000001798">
    <property type="component" value="Chromosome bcin06"/>
</dbReference>
<dbReference type="GO" id="GO:0016020">
    <property type="term" value="C:membrane"/>
    <property type="evidence" value="ECO:0007669"/>
    <property type="project" value="UniProtKB-SubCell"/>
</dbReference>
<dbReference type="GO" id="GO:0005739">
    <property type="term" value="C:mitochondrion"/>
    <property type="evidence" value="ECO:0007669"/>
    <property type="project" value="UniProtKB-SubCell"/>
</dbReference>
<dbReference type="GO" id="GO:0004519">
    <property type="term" value="F:endonuclease activity"/>
    <property type="evidence" value="ECO:0007669"/>
    <property type="project" value="UniProtKB-KW"/>
</dbReference>
<dbReference type="GO" id="GO:0046872">
    <property type="term" value="F:metal ion binding"/>
    <property type="evidence" value="ECO:0007669"/>
    <property type="project" value="UniProtKB-KW"/>
</dbReference>
<dbReference type="FunFam" id="2.40.50.90:FF:000029">
    <property type="entry name" value="Probable endonuclease lcl3"/>
    <property type="match status" value="1"/>
</dbReference>
<dbReference type="Gene3D" id="2.40.50.90">
    <property type="match status" value="1"/>
</dbReference>
<dbReference type="InterPro" id="IPR035437">
    <property type="entry name" value="SNase_OB-fold_sf"/>
</dbReference>
<dbReference type="InterPro" id="IPR016071">
    <property type="entry name" value="Staphylococal_nuclease_OB-fold"/>
</dbReference>
<dbReference type="PANTHER" id="PTHR12302">
    <property type="entry name" value="EBNA2 BINDING PROTEIN P100"/>
    <property type="match status" value="1"/>
</dbReference>
<dbReference type="PANTHER" id="PTHR12302:SF3">
    <property type="entry name" value="SERINE_THREONINE-PROTEIN KINASE 31"/>
    <property type="match status" value="1"/>
</dbReference>
<dbReference type="Pfam" id="PF00565">
    <property type="entry name" value="SNase"/>
    <property type="match status" value="1"/>
</dbReference>
<dbReference type="SMART" id="SM00318">
    <property type="entry name" value="SNc"/>
    <property type="match status" value="1"/>
</dbReference>
<dbReference type="SUPFAM" id="SSF50199">
    <property type="entry name" value="Staphylococcal nuclease"/>
    <property type="match status" value="1"/>
</dbReference>
<dbReference type="PROSITE" id="PS50830">
    <property type="entry name" value="TNASE_3"/>
    <property type="match status" value="1"/>
</dbReference>
<feature type="chain" id="PRO_0000408649" description="Probable endonuclease lcl3">
    <location>
        <begin position="1"/>
        <end position="263"/>
    </location>
</feature>
<feature type="transmembrane region" description="Helical" evidence="2">
    <location>
        <begin position="41"/>
        <end position="59"/>
    </location>
</feature>
<feature type="domain" description="TNase-like" evidence="3">
    <location>
        <begin position="80"/>
        <end position="240"/>
    </location>
</feature>
<feature type="region of interest" description="Disordered" evidence="4">
    <location>
        <begin position="1"/>
        <end position="21"/>
    </location>
</feature>
<feature type="region of interest" description="Disordered" evidence="4">
    <location>
        <begin position="236"/>
        <end position="263"/>
    </location>
</feature>
<feature type="compositionally biased region" description="Basic and acidic residues" evidence="4">
    <location>
        <begin position="8"/>
        <end position="19"/>
    </location>
</feature>
<feature type="compositionally biased region" description="Basic and acidic residues" evidence="4">
    <location>
        <begin position="241"/>
        <end position="253"/>
    </location>
</feature>
<feature type="active site" evidence="3">
    <location>
        <position position="131"/>
    </location>
</feature>
<feature type="active site" evidence="3">
    <location>
        <position position="139"/>
    </location>
</feature>
<feature type="active site" evidence="3">
    <location>
        <position position="179"/>
    </location>
</feature>
<feature type="binding site" evidence="3">
    <location>
        <position position="136"/>
    </location>
    <ligand>
        <name>Ca(2+)</name>
        <dbReference type="ChEBI" id="CHEBI:29108"/>
    </ligand>
</feature>
<reference key="1">
    <citation type="journal article" date="2011" name="PLoS Genet.">
        <title>Genomic analysis of the necrotrophic fungal pathogens Sclerotinia sclerotiorum and Botrytis cinerea.</title>
        <authorList>
            <person name="Amselem J."/>
            <person name="Cuomo C.A."/>
            <person name="van Kan J.A.L."/>
            <person name="Viaud M."/>
            <person name="Benito E.P."/>
            <person name="Couloux A."/>
            <person name="Coutinho P.M."/>
            <person name="de Vries R.P."/>
            <person name="Dyer P.S."/>
            <person name="Fillinger S."/>
            <person name="Fournier E."/>
            <person name="Gout L."/>
            <person name="Hahn M."/>
            <person name="Kohn L."/>
            <person name="Lapalu N."/>
            <person name="Plummer K.M."/>
            <person name="Pradier J.-M."/>
            <person name="Quevillon E."/>
            <person name="Sharon A."/>
            <person name="Simon A."/>
            <person name="ten Have A."/>
            <person name="Tudzynski B."/>
            <person name="Tudzynski P."/>
            <person name="Wincker P."/>
            <person name="Andrew M."/>
            <person name="Anthouard V."/>
            <person name="Beever R.E."/>
            <person name="Beffa R."/>
            <person name="Benoit I."/>
            <person name="Bouzid O."/>
            <person name="Brault B."/>
            <person name="Chen Z."/>
            <person name="Choquer M."/>
            <person name="Collemare J."/>
            <person name="Cotton P."/>
            <person name="Danchin E.G."/>
            <person name="Da Silva C."/>
            <person name="Gautier A."/>
            <person name="Giraud C."/>
            <person name="Giraud T."/>
            <person name="Gonzalez C."/>
            <person name="Grossetete S."/>
            <person name="Gueldener U."/>
            <person name="Henrissat B."/>
            <person name="Howlett B.J."/>
            <person name="Kodira C."/>
            <person name="Kretschmer M."/>
            <person name="Lappartient A."/>
            <person name="Leroch M."/>
            <person name="Levis C."/>
            <person name="Mauceli E."/>
            <person name="Neuveglise C."/>
            <person name="Oeser B."/>
            <person name="Pearson M."/>
            <person name="Poulain J."/>
            <person name="Poussereau N."/>
            <person name="Quesneville H."/>
            <person name="Rascle C."/>
            <person name="Schumacher J."/>
            <person name="Segurens B."/>
            <person name="Sexton A."/>
            <person name="Silva E."/>
            <person name="Sirven C."/>
            <person name="Soanes D.M."/>
            <person name="Talbot N.J."/>
            <person name="Templeton M."/>
            <person name="Yandava C."/>
            <person name="Yarden O."/>
            <person name="Zeng Q."/>
            <person name="Rollins J.A."/>
            <person name="Lebrun M.-H."/>
            <person name="Dickman M."/>
        </authorList>
    </citation>
    <scope>NUCLEOTIDE SEQUENCE [LARGE SCALE GENOMIC DNA]</scope>
    <source>
        <strain>B05.10</strain>
    </source>
</reference>
<reference key="2">
    <citation type="journal article" date="2012" name="Eukaryot. Cell">
        <title>Genome update of Botrytis cinerea strains B05.10 and T4.</title>
        <authorList>
            <person name="Staats M."/>
            <person name="van Kan J.A.L."/>
        </authorList>
    </citation>
    <scope>NUCLEOTIDE SEQUENCE [LARGE SCALE GENOMIC DNA]</scope>
    <scope>GENOME REANNOTATION</scope>
    <source>
        <strain>B05.10</strain>
    </source>
</reference>
<reference key="3">
    <citation type="journal article" date="2017" name="Mol. Plant Pathol.">
        <title>A gapless genome sequence of the fungus Botrytis cinerea.</title>
        <authorList>
            <person name="van Kan J.A.L."/>
            <person name="Stassen J.H.M."/>
            <person name="Mosbach A."/>
            <person name="van der Lee T.A.J."/>
            <person name="Faino L."/>
            <person name="Farmer A.D."/>
            <person name="Papasotiriou D.G."/>
            <person name="Zhou S."/>
            <person name="Seidl M.F."/>
            <person name="Cottam E."/>
            <person name="Edel D."/>
            <person name="Hahn M."/>
            <person name="Schwartz D.C."/>
            <person name="Dietrich R.A."/>
            <person name="Widdison S."/>
            <person name="Scalliet G."/>
        </authorList>
    </citation>
    <scope>NUCLEOTIDE SEQUENCE [LARGE SCALE GENOMIC DNA]</scope>
    <scope>GENOME REANNOTATION</scope>
    <source>
        <strain>B05.10</strain>
    </source>
</reference>
<name>LCL3_BOTFB</name>
<sequence>MGWLDFSSKSKKEEKDDTRPSFTWGDNLNATDWQHYTDPRTVIPTILLTTTILVSTRLYRSYLRRIPEAAYIRPGFFRKRSLFGTVTRVGDADNFHLFHTPGGRLAGWGWMPGRKKLPEGKDLKNKTIHVRIAGVDAPEGAHFGKPAQPFSAEALAWLREYIQNRRVRAYIYKRDQYDRVVATVWVRRFLVRKDVGKEMLRAGMATVYEAKMGAEFGDFEAQYRAIEEEAKKKKLGMWSGKKKDYESPRDYKTRTANAAKMLK</sequence>
<comment type="subcellular location">
    <subcellularLocation>
        <location>Mitochondrion</location>
    </subcellularLocation>
    <subcellularLocation>
        <location evidence="1">Membrane</location>
        <topology evidence="1">Single-pass membrane protein</topology>
    </subcellularLocation>
</comment>
<comment type="similarity">
    <text evidence="5">Belongs to the LCL3 family.</text>
</comment>
<keyword id="KW-0106">Calcium</keyword>
<keyword id="KW-0255">Endonuclease</keyword>
<keyword id="KW-0378">Hydrolase</keyword>
<keyword id="KW-0472">Membrane</keyword>
<keyword id="KW-0479">Metal-binding</keyword>
<keyword id="KW-0496">Mitochondrion</keyword>
<keyword id="KW-0540">Nuclease</keyword>
<keyword id="KW-1185">Reference proteome</keyword>
<keyword id="KW-0812">Transmembrane</keyword>
<keyword id="KW-1133">Transmembrane helix</keyword>
<protein>
    <recommendedName>
        <fullName>Probable endonuclease lcl3</fullName>
        <ecNumber>3.1.-.-</ecNumber>
    </recommendedName>
</protein>
<organism>
    <name type="scientific">Botryotinia fuckeliana (strain B05.10)</name>
    <name type="common">Noble rot fungus</name>
    <name type="synonym">Botrytis cinerea</name>
    <dbReference type="NCBI Taxonomy" id="332648"/>
    <lineage>
        <taxon>Eukaryota</taxon>
        <taxon>Fungi</taxon>
        <taxon>Dikarya</taxon>
        <taxon>Ascomycota</taxon>
        <taxon>Pezizomycotina</taxon>
        <taxon>Leotiomycetes</taxon>
        <taxon>Helotiales</taxon>
        <taxon>Sclerotiniaceae</taxon>
        <taxon>Botrytis</taxon>
    </lineage>
</organism>
<proteinExistence type="inferred from homology"/>
<evidence type="ECO:0000250" key="1"/>
<evidence type="ECO:0000255" key="2"/>
<evidence type="ECO:0000255" key="3">
    <source>
        <dbReference type="PROSITE-ProRule" id="PRU00272"/>
    </source>
</evidence>
<evidence type="ECO:0000256" key="4">
    <source>
        <dbReference type="SAM" id="MobiDB-lite"/>
    </source>
</evidence>
<evidence type="ECO:0000305" key="5"/>
<accession>A6RP27</accession>
<accession>A0A384JL99</accession>